<proteinExistence type="inferred from homology"/>
<accession>Q9ZE42</accession>
<protein>
    <recommendedName>
        <fullName>Uncharacterized protein RP106</fullName>
    </recommendedName>
</protein>
<comment type="subcellular location">
    <subcellularLocation>
        <location evidence="3">Cell membrane</location>
        <topology evidence="3">Multi-pass membrane protein</topology>
    </subcellularLocation>
</comment>
<comment type="similarity">
    <text evidence="3">Belongs to the TrbL/VirB6 family.</text>
</comment>
<dbReference type="EMBL" id="AJ235270">
    <property type="protein sequence ID" value="CAA14575.1"/>
    <property type="molecule type" value="Genomic_DNA"/>
</dbReference>
<dbReference type="PIR" id="H71719">
    <property type="entry name" value="H71719"/>
</dbReference>
<dbReference type="RefSeq" id="NP_220498.1">
    <property type="nucleotide sequence ID" value="NC_000963.1"/>
</dbReference>
<dbReference type="RefSeq" id="WP_010886212.1">
    <property type="nucleotide sequence ID" value="NC_000963.1"/>
</dbReference>
<dbReference type="STRING" id="272947.gene:17555189"/>
<dbReference type="EnsemblBacteria" id="CAA14575">
    <property type="protein sequence ID" value="CAA14575"/>
    <property type="gene ID" value="CAA14575"/>
</dbReference>
<dbReference type="KEGG" id="rpr:RP106"/>
<dbReference type="PATRIC" id="fig|272947.5.peg.108"/>
<dbReference type="eggNOG" id="COG3704">
    <property type="taxonomic scope" value="Bacteria"/>
</dbReference>
<dbReference type="HOGENOM" id="CLU_304399_0_0_5"/>
<dbReference type="OrthoDB" id="7160583at2"/>
<dbReference type="Proteomes" id="UP000002480">
    <property type="component" value="Chromosome"/>
</dbReference>
<dbReference type="GO" id="GO:0005886">
    <property type="term" value="C:plasma membrane"/>
    <property type="evidence" value="ECO:0007669"/>
    <property type="project" value="UniProtKB-SubCell"/>
</dbReference>
<dbReference type="GO" id="GO:0030255">
    <property type="term" value="P:protein secretion by the type IV secretion system"/>
    <property type="evidence" value="ECO:0007669"/>
    <property type="project" value="InterPro"/>
</dbReference>
<dbReference type="InterPro" id="IPR007688">
    <property type="entry name" value="Conjugal_tfr_TrbL/VirB6"/>
</dbReference>
<dbReference type="Pfam" id="PF04610">
    <property type="entry name" value="TrbL"/>
    <property type="match status" value="1"/>
</dbReference>
<reference key="1">
    <citation type="journal article" date="1998" name="Nature">
        <title>The genome sequence of Rickettsia prowazekii and the origin of mitochondria.</title>
        <authorList>
            <person name="Andersson S.G.E."/>
            <person name="Zomorodipour A."/>
            <person name="Andersson J.O."/>
            <person name="Sicheritz-Ponten T."/>
            <person name="Alsmark U.C.M."/>
            <person name="Podowski R.M."/>
            <person name="Naeslund A.K."/>
            <person name="Eriksson A.-S."/>
            <person name="Winkler H.H."/>
            <person name="Kurland C.G."/>
        </authorList>
    </citation>
    <scope>NUCLEOTIDE SEQUENCE [LARGE SCALE GENOMIC DNA]</scope>
    <source>
        <strain>Madrid E</strain>
    </source>
</reference>
<name>Y106_RICPR</name>
<keyword id="KW-1003">Cell membrane</keyword>
<keyword id="KW-0472">Membrane</keyword>
<keyword id="KW-1185">Reference proteome</keyword>
<keyword id="KW-0732">Signal</keyword>
<keyword id="KW-0812">Transmembrane</keyword>
<keyword id="KW-1133">Transmembrane helix</keyword>
<sequence>MQSNLLKVLGVLAIVATLVCFIFAALGMIGAVRVGNGCYMRYSKDGNGSTDSITSTITLNANANYVNISKMLPDGTTKLIPDPNRYGEWLNTQVLVEKNQSVNLQVVGQVSLCLAYLPKNNLQFTERTRPGKSNLDDSGQMIPIPRVQDANSPPISLIMDAKNNEWRNIAELYANDKVLVSVSPNFANTDATVDDVFKGVKVTKDCTQGKTSYYPICGKYSIYSGKYVTACELKQNYWKGNVHREECYCVFGCIYKEDSDPWVCDMANAASHCCTSLVCDSLPAWINHYSNMPEAYKDDGSFTFSWSDKSKNLLIEYEDLQCSNNVNIPPNGQCPDIVNNRSPKDKNYIGGVSCTSGICKDGDFQKNRKFWYTADGKGGKGPTGLIYQMNDIGSVSQALPSKLEFAKFVPETEQPPEYKDKNGKYLYKVIYNIPFNSNIEKSYLQYRLWSPTSQDASKNTGGYVLNIKQTKCYRENGNSFKDIFDDRGRVQYIIVKSSENPNTSGKTYSPQGINVDSDGKSHFNANESGYIWMKILNDPSNNLKDYKDSEGSYKVHFSTSLKVGSFTIKVMNPLLQLFKTKVQDAATSIFKNMVCYKATDNSSCTNFFTYIKAILILYVMTYGAMFLLGFAKINQKELVIRIAKIGVVSGLINGNTFEFFNNYLFDAITNFSDSIIANMSGYSLFTSTNTISNPFMFLDAIMSKIFFSQTFIAQLLSLLSLGLSGIIYFIITFIAICIVIITTLRAIAVYIMAFMATCILIGIAPLFISFLLFDFTRYLFDNWVRFTIRYMIEPVVMMAGIIVLTQLFTIYLDFVLGYSVCWKCTLPIKIPFIGTILPIALLNVPIFCINWFAPWGMDYMSGMMGVNMQNIVALVIIAYGMYGYVEFSGRMVAKLTSAAGPSATQIGGRMSHDAGQKVLSQIGMDYRTRQGITGRAKSRLEQRNRTLEHAEQNSKKYKKRIGENTNEETLK</sequence>
<feature type="signal peptide" evidence="1">
    <location>
        <begin position="1"/>
        <end position="24"/>
    </location>
</feature>
<feature type="chain" id="PRO_0000269215" description="Uncharacterized protein RP106">
    <location>
        <begin position="25"/>
        <end position="971"/>
    </location>
</feature>
<feature type="transmembrane region" description="Helical" evidence="1">
    <location>
        <begin position="611"/>
        <end position="631"/>
    </location>
</feature>
<feature type="transmembrane region" description="Helical" evidence="1">
    <location>
        <begin position="721"/>
        <end position="741"/>
    </location>
</feature>
<feature type="transmembrane region" description="Helical" evidence="1">
    <location>
        <begin position="753"/>
        <end position="773"/>
    </location>
</feature>
<feature type="transmembrane region" description="Helical" evidence="1">
    <location>
        <begin position="795"/>
        <end position="815"/>
    </location>
</feature>
<feature type="transmembrane region" description="Helical" evidence="1">
    <location>
        <begin position="832"/>
        <end position="852"/>
    </location>
</feature>
<feature type="transmembrane region" description="Helical" evidence="1">
    <location>
        <begin position="865"/>
        <end position="885"/>
    </location>
</feature>
<feature type="region of interest" description="Disordered" evidence="2">
    <location>
        <begin position="127"/>
        <end position="146"/>
    </location>
</feature>
<feature type="region of interest" description="Disordered" evidence="2">
    <location>
        <begin position="933"/>
        <end position="971"/>
    </location>
</feature>
<feature type="compositionally biased region" description="Basic and acidic residues" evidence="2">
    <location>
        <begin position="938"/>
        <end position="954"/>
    </location>
</feature>
<gene>
    <name type="ordered locus">RP106</name>
</gene>
<organism>
    <name type="scientific">Rickettsia prowazekii (strain Madrid E)</name>
    <dbReference type="NCBI Taxonomy" id="272947"/>
    <lineage>
        <taxon>Bacteria</taxon>
        <taxon>Pseudomonadati</taxon>
        <taxon>Pseudomonadota</taxon>
        <taxon>Alphaproteobacteria</taxon>
        <taxon>Rickettsiales</taxon>
        <taxon>Rickettsiaceae</taxon>
        <taxon>Rickettsieae</taxon>
        <taxon>Rickettsia</taxon>
        <taxon>typhus group</taxon>
    </lineage>
</organism>
<evidence type="ECO:0000255" key="1"/>
<evidence type="ECO:0000256" key="2">
    <source>
        <dbReference type="SAM" id="MobiDB-lite"/>
    </source>
</evidence>
<evidence type="ECO:0000305" key="3"/>